<reference key="1">
    <citation type="journal article" date="2009" name="PLoS Genet.">
        <title>Organised genome dynamics in the Escherichia coli species results in highly diverse adaptive paths.</title>
        <authorList>
            <person name="Touchon M."/>
            <person name="Hoede C."/>
            <person name="Tenaillon O."/>
            <person name="Barbe V."/>
            <person name="Baeriswyl S."/>
            <person name="Bidet P."/>
            <person name="Bingen E."/>
            <person name="Bonacorsi S."/>
            <person name="Bouchier C."/>
            <person name="Bouvet O."/>
            <person name="Calteau A."/>
            <person name="Chiapello H."/>
            <person name="Clermont O."/>
            <person name="Cruveiller S."/>
            <person name="Danchin A."/>
            <person name="Diard M."/>
            <person name="Dossat C."/>
            <person name="Karoui M.E."/>
            <person name="Frapy E."/>
            <person name="Garry L."/>
            <person name="Ghigo J.M."/>
            <person name="Gilles A.M."/>
            <person name="Johnson J."/>
            <person name="Le Bouguenec C."/>
            <person name="Lescat M."/>
            <person name="Mangenot S."/>
            <person name="Martinez-Jehanne V."/>
            <person name="Matic I."/>
            <person name="Nassif X."/>
            <person name="Oztas S."/>
            <person name="Petit M.A."/>
            <person name="Pichon C."/>
            <person name="Rouy Z."/>
            <person name="Ruf C.S."/>
            <person name="Schneider D."/>
            <person name="Tourret J."/>
            <person name="Vacherie B."/>
            <person name="Vallenet D."/>
            <person name="Medigue C."/>
            <person name="Rocha E.P.C."/>
            <person name="Denamur E."/>
        </authorList>
    </citation>
    <scope>NUCLEOTIDE SEQUENCE [LARGE SCALE GENOMIC DNA]</scope>
    <source>
        <strain>ED1a</strain>
    </source>
</reference>
<feature type="chain" id="PRO_1000124865" description="Divalent metal cation transporter MntH">
    <location>
        <begin position="1"/>
        <end position="412"/>
    </location>
</feature>
<feature type="topological domain" description="Cytoplasmic" evidence="1">
    <location>
        <begin position="1"/>
        <end position="19"/>
    </location>
</feature>
<feature type="transmembrane region" description="Helical" evidence="1">
    <location>
        <begin position="20"/>
        <end position="39"/>
    </location>
</feature>
<feature type="topological domain" description="Periplasmic" evidence="1">
    <location>
        <begin position="40"/>
        <end position="51"/>
    </location>
</feature>
<feature type="transmembrane region" description="Helical" evidence="1">
    <location>
        <begin position="52"/>
        <end position="71"/>
    </location>
</feature>
<feature type="topological domain" description="Cytoplasmic" evidence="1">
    <location>
        <begin position="72"/>
        <end position="95"/>
    </location>
</feature>
<feature type="transmembrane region" description="Helical" evidence="1">
    <location>
        <begin position="96"/>
        <end position="118"/>
    </location>
</feature>
<feature type="topological domain" description="Periplasmic" evidence="1">
    <location>
        <begin position="119"/>
        <end position="125"/>
    </location>
</feature>
<feature type="transmembrane region" description="Helical" evidence="1">
    <location>
        <begin position="126"/>
        <end position="145"/>
    </location>
</feature>
<feature type="topological domain" description="Cytoplasmic" evidence="1">
    <location>
        <begin position="146"/>
        <end position="155"/>
    </location>
</feature>
<feature type="transmembrane region" description="Helical" evidence="1">
    <location>
        <begin position="156"/>
        <end position="175"/>
    </location>
</feature>
<feature type="topological domain" description="Periplasmic" evidence="1">
    <location>
        <begin position="176"/>
        <end position="196"/>
    </location>
</feature>
<feature type="transmembrane region" description="Helical" evidence="1">
    <location>
        <begin position="197"/>
        <end position="220"/>
    </location>
</feature>
<feature type="topological domain" description="Cytoplasmic" evidence="1">
    <location>
        <begin position="221"/>
        <end position="238"/>
    </location>
</feature>
<feature type="transmembrane region" description="Helical" evidence="1">
    <location>
        <begin position="239"/>
        <end position="258"/>
    </location>
</feature>
<feature type="topological domain" description="Periplasmic" evidence="1">
    <location>
        <begin position="259"/>
        <end position="276"/>
    </location>
</feature>
<feature type="transmembrane region" description="Helical" evidence="1">
    <location>
        <begin position="277"/>
        <end position="297"/>
    </location>
</feature>
<feature type="topological domain" description="Cytoplasmic" evidence="1">
    <location>
        <begin position="298"/>
        <end position="327"/>
    </location>
</feature>
<feature type="transmembrane region" description="Helical" evidence="1">
    <location>
        <begin position="328"/>
        <end position="344"/>
    </location>
</feature>
<feature type="topological domain" description="Periplasmic" evidence="1">
    <location>
        <begin position="345"/>
        <end position="350"/>
    </location>
</feature>
<feature type="transmembrane region" description="Helical" evidence="1">
    <location>
        <begin position="351"/>
        <end position="370"/>
    </location>
</feature>
<feature type="topological domain" description="Cytoplasmic" evidence="1">
    <location>
        <begin position="371"/>
        <end position="387"/>
    </location>
</feature>
<feature type="transmembrane region" description="Helical" evidence="1">
    <location>
        <begin position="388"/>
        <end position="406"/>
    </location>
</feature>
<feature type="topological domain" description="Periplasmic" evidence="1">
    <location>
        <begin position="407"/>
        <end position="412"/>
    </location>
</feature>
<protein>
    <recommendedName>
        <fullName evidence="1">Divalent metal cation transporter MntH</fullName>
    </recommendedName>
</protein>
<sequence>MTNYRVESSSGRAARKMRLALMGPAFIAAIGYIDPGNFATNIQAGASFGYQLLWVVVWANLMAMLIQILSAKLGIATGKNLAEQIRDHYPRPVVWFYWVQAEIIAMATDLAEFIGAAIGFKLILGVSLLQGAVLTGIATFLILMLQRRGQKPLEKVIGGLLLFVAAAYIVELIFSQPNLAQLGKGMVIPSLPTSEAVFLAAGVLGATIMPHVIYLHSSLTQHLHGGSRQQRYSATKWDVAIAMTIAGFVNLAMMATAAAAFHFSGHTGVADLDEAYLTLQPLLSHAAATVFGLSLVAAGLSSTVVGTLAGQVVMQGFIRFHIPLWVRRTVTMLPSFIVILMGLDPTRILVMSQVLLSFGIALALVPLLIFTSDSKLMGDLVNSKRVKQTGWVIVVLVVALNIWLLVGTALGL</sequence>
<keyword id="KW-0997">Cell inner membrane</keyword>
<keyword id="KW-1003">Cell membrane</keyword>
<keyword id="KW-0406">Ion transport</keyword>
<keyword id="KW-0472">Membrane</keyword>
<keyword id="KW-0769">Symport</keyword>
<keyword id="KW-0812">Transmembrane</keyword>
<keyword id="KW-1133">Transmembrane helix</keyword>
<keyword id="KW-0813">Transport</keyword>
<organism>
    <name type="scientific">Escherichia coli O81 (strain ED1a)</name>
    <dbReference type="NCBI Taxonomy" id="585397"/>
    <lineage>
        <taxon>Bacteria</taxon>
        <taxon>Pseudomonadati</taxon>
        <taxon>Pseudomonadota</taxon>
        <taxon>Gammaproteobacteria</taxon>
        <taxon>Enterobacterales</taxon>
        <taxon>Enterobacteriaceae</taxon>
        <taxon>Escherichia</taxon>
    </lineage>
</organism>
<gene>
    <name evidence="1" type="primary">mntH</name>
    <name type="ordered locus">ECED1_2838</name>
</gene>
<comment type="function">
    <text evidence="1">H(+)-stimulated, divalent metal cation uptake system.</text>
</comment>
<comment type="subcellular location">
    <subcellularLocation>
        <location evidence="1">Cell inner membrane</location>
        <topology evidence="1">Multi-pass membrane protein</topology>
    </subcellularLocation>
</comment>
<comment type="similarity">
    <text evidence="1">Belongs to the NRAMP family.</text>
</comment>
<proteinExistence type="inferred from homology"/>
<name>MNTH_ECO81</name>
<accession>B7MY49</accession>
<evidence type="ECO:0000255" key="1">
    <source>
        <dbReference type="HAMAP-Rule" id="MF_00221"/>
    </source>
</evidence>
<dbReference type="EMBL" id="CU928162">
    <property type="protein sequence ID" value="CAR09015.2"/>
    <property type="molecule type" value="Genomic_DNA"/>
</dbReference>
<dbReference type="RefSeq" id="WP_000186369.1">
    <property type="nucleotide sequence ID" value="NC_011745.1"/>
</dbReference>
<dbReference type="SMR" id="B7MY49"/>
<dbReference type="KEGG" id="ecq:ECED1_2838"/>
<dbReference type="HOGENOM" id="CLU_020088_2_0_6"/>
<dbReference type="Proteomes" id="UP000000748">
    <property type="component" value="Chromosome"/>
</dbReference>
<dbReference type="GO" id="GO:0005886">
    <property type="term" value="C:plasma membrane"/>
    <property type="evidence" value="ECO:0007669"/>
    <property type="project" value="UniProtKB-SubCell"/>
</dbReference>
<dbReference type="GO" id="GO:0015086">
    <property type="term" value="F:cadmium ion transmembrane transporter activity"/>
    <property type="evidence" value="ECO:0007669"/>
    <property type="project" value="TreeGrafter"/>
</dbReference>
<dbReference type="GO" id="GO:0005384">
    <property type="term" value="F:manganese ion transmembrane transporter activity"/>
    <property type="evidence" value="ECO:0007669"/>
    <property type="project" value="TreeGrafter"/>
</dbReference>
<dbReference type="GO" id="GO:0046872">
    <property type="term" value="F:metal ion binding"/>
    <property type="evidence" value="ECO:0007669"/>
    <property type="project" value="UniProtKB-UniRule"/>
</dbReference>
<dbReference type="GO" id="GO:0015293">
    <property type="term" value="F:symporter activity"/>
    <property type="evidence" value="ECO:0007669"/>
    <property type="project" value="UniProtKB-UniRule"/>
</dbReference>
<dbReference type="GO" id="GO:0034755">
    <property type="term" value="P:iron ion transmembrane transport"/>
    <property type="evidence" value="ECO:0007669"/>
    <property type="project" value="TreeGrafter"/>
</dbReference>
<dbReference type="HAMAP" id="MF_00221">
    <property type="entry name" value="NRAMP"/>
    <property type="match status" value="1"/>
</dbReference>
<dbReference type="InterPro" id="IPR001046">
    <property type="entry name" value="NRAMP_fam"/>
</dbReference>
<dbReference type="NCBIfam" id="TIGR01197">
    <property type="entry name" value="nramp"/>
    <property type="match status" value="1"/>
</dbReference>
<dbReference type="NCBIfam" id="NF037982">
    <property type="entry name" value="Nramp_1"/>
    <property type="match status" value="1"/>
</dbReference>
<dbReference type="NCBIfam" id="NF001923">
    <property type="entry name" value="PRK00701.1"/>
    <property type="match status" value="1"/>
</dbReference>
<dbReference type="PANTHER" id="PTHR11706:SF33">
    <property type="entry name" value="NATURAL RESISTANCE-ASSOCIATED MACROPHAGE PROTEIN 2"/>
    <property type="match status" value="1"/>
</dbReference>
<dbReference type="PANTHER" id="PTHR11706">
    <property type="entry name" value="SOLUTE CARRIER PROTEIN FAMILY 11 MEMBER"/>
    <property type="match status" value="1"/>
</dbReference>
<dbReference type="Pfam" id="PF01566">
    <property type="entry name" value="Nramp"/>
    <property type="match status" value="1"/>
</dbReference>
<dbReference type="PRINTS" id="PR00447">
    <property type="entry name" value="NATRESASSCMP"/>
</dbReference>